<evidence type="ECO:0000255" key="1">
    <source>
        <dbReference type="PROSITE-ProRule" id="PRU00630"/>
    </source>
</evidence>
<evidence type="ECO:0000256" key="2">
    <source>
        <dbReference type="SAM" id="MobiDB-lite"/>
    </source>
</evidence>
<evidence type="ECO:0000269" key="3">
    <source>
    </source>
</evidence>
<evidence type="ECO:0000269" key="4">
    <source>
    </source>
</evidence>
<evidence type="ECO:0000269" key="5">
    <source>
    </source>
</evidence>
<evidence type="ECO:0000269" key="6">
    <source>
    </source>
</evidence>
<evidence type="ECO:0000269" key="7">
    <source>
    </source>
</evidence>
<evidence type="ECO:0000269" key="8">
    <source>
    </source>
</evidence>
<evidence type="ECO:0000269" key="9">
    <source>
    </source>
</evidence>
<evidence type="ECO:0000269" key="10">
    <source>
    </source>
</evidence>
<evidence type="ECO:0000269" key="11">
    <source>
    </source>
</evidence>
<evidence type="ECO:0000303" key="12">
    <source>
    </source>
</evidence>
<evidence type="ECO:0000303" key="13">
    <source>
    </source>
</evidence>
<evidence type="ECO:0000305" key="14"/>
<feature type="chain" id="PRO_0000072296" description="Cell pattern formation-associated protein stuA">
    <location>
        <begin position="1"/>
        <end position="622"/>
    </location>
</feature>
<feature type="domain" description="HTH APSES-type" evidence="1">
    <location>
        <begin position="129"/>
        <end position="235"/>
    </location>
</feature>
<feature type="DNA-binding region" description="H-T-H motif" evidence="1">
    <location>
        <begin position="163"/>
        <end position="184"/>
    </location>
</feature>
<feature type="region of interest" description="Disordered" evidence="2">
    <location>
        <begin position="1"/>
        <end position="24"/>
    </location>
</feature>
<feature type="region of interest" description="Disordered" evidence="2">
    <location>
        <begin position="62"/>
        <end position="81"/>
    </location>
</feature>
<feature type="region of interest" description="Disordered" evidence="2">
    <location>
        <begin position="239"/>
        <end position="517"/>
    </location>
</feature>
<feature type="region of interest" description="Disordered" evidence="2">
    <location>
        <begin position="549"/>
        <end position="622"/>
    </location>
</feature>
<feature type="region of interest" description="Nuclear localization domain" evidence="12">
    <location>
        <begin position="565"/>
        <end position="590"/>
    </location>
</feature>
<feature type="compositionally biased region" description="Polar residues" evidence="2">
    <location>
        <begin position="274"/>
        <end position="283"/>
    </location>
</feature>
<feature type="compositionally biased region" description="Polar residues" evidence="2">
    <location>
        <begin position="302"/>
        <end position="345"/>
    </location>
</feature>
<feature type="compositionally biased region" description="Polar residues" evidence="2">
    <location>
        <begin position="355"/>
        <end position="370"/>
    </location>
</feature>
<feature type="compositionally biased region" description="Low complexity" evidence="2">
    <location>
        <begin position="384"/>
        <end position="395"/>
    </location>
</feature>
<feature type="compositionally biased region" description="Polar residues" evidence="2">
    <location>
        <begin position="404"/>
        <end position="421"/>
    </location>
</feature>
<feature type="compositionally biased region" description="Polar residues" evidence="2">
    <location>
        <begin position="455"/>
        <end position="470"/>
    </location>
</feature>
<feature type="compositionally biased region" description="Polar residues" evidence="2">
    <location>
        <begin position="480"/>
        <end position="506"/>
    </location>
</feature>
<feature type="compositionally biased region" description="Polar residues" evidence="2">
    <location>
        <begin position="549"/>
        <end position="563"/>
    </location>
</feature>
<feature type="compositionally biased region" description="Basic and acidic residues" evidence="2">
    <location>
        <begin position="566"/>
        <end position="586"/>
    </location>
</feature>
<gene>
    <name evidence="13" type="primary">stuA</name>
    <name type="ORF">AN5836</name>
</gene>
<keyword id="KW-0183">Conidiation</keyword>
<keyword id="KW-0238">DNA-binding</keyword>
<keyword id="KW-0539">Nucleus</keyword>
<keyword id="KW-1185">Reference proteome</keyword>
<keyword id="KW-0749">Sporulation</keyword>
<keyword id="KW-0804">Transcription</keyword>
<keyword id="KW-0805">Transcription regulation</keyword>
<comment type="function">
    <text evidence="3 4 7 8 9 10">Transcription factor that regulates asexual reproduction (PubMed:1516832, PubMed:25550299, PubMed:8722771, PubMed:9312029). Binds the StuA-response elements (StRE) with the consensus sequence 5'-(A/T)CGCG(T/A)N(A/C)-3' at the promoters of target genes (PubMed:25359270, PubMed:9312029). Required from the very earliest events of asexual reproduction until completion of conidiophore development, but is not specifically required for differentiation of conidia (PubMed:1516832). Represses transcription of the abaA developmental regulatory gene and of the developmentally regulated awh11 gene (PubMed:9312029). Controls the expression of the catalase-peroxidase gene cpeA (PubMed:12455692). Plays an important role in cell wall biogenesis during the development by controlling the transcription level of fksA (PubMed:25359270).</text>
</comment>
<comment type="subcellular location">
    <subcellularLocation>
        <location evidence="8 11">Nucleus</location>
    </subcellularLocation>
</comment>
<comment type="induction">
    <text evidence="4 5 6">Expression is increased 50-fold during the establishment of developmental competence (PubMed:1516832, PubMed:17630328, PubMed:2062309). Expression is positively controlled by brlA (PubMed:1516832). Expression is also regulated by the LAMMER kinase lkhA (PubMed:23516554).</text>
</comment>
<comment type="disruption phenotype">
    <text evidence="7 8">Leads to defective conidiophore morphology and impairs conidia production (PubMed:25550299). Affects cell wall beta-1,3-glucan biosynthesis (PubMed:25359270).</text>
</comment>
<comment type="similarity">
    <text evidence="14">Belongs to the EFG1/PHD1/stuA family.</text>
</comment>
<protein>
    <recommendedName>
        <fullName evidence="14">Cell pattern formation-associated protein stuA</fullName>
    </recommendedName>
    <alternativeName>
        <fullName evidence="13">Stunted protein A</fullName>
    </alternativeName>
</protein>
<reference key="1">
    <citation type="journal article" date="1992" name="Genes Dev.">
        <title>StuA is required for cell pattern formation in Aspergillus.</title>
        <authorList>
            <person name="Miller K.Y."/>
            <person name="Wu J."/>
            <person name="Miller B.L."/>
        </authorList>
    </citation>
    <scope>NUCLEOTIDE SEQUENCE [GENOMIC DNA]</scope>
    <scope>FUNCTION</scope>
    <scope>INDUCTION</scope>
</reference>
<reference key="2">
    <citation type="submission" date="2003-08" db="EMBL/GenBank/DDBJ databases">
        <authorList>
            <person name="Miller B.L."/>
        </authorList>
    </citation>
    <scope>SEQUENCE REVISION</scope>
</reference>
<reference key="3">
    <citation type="journal article" date="2005" name="Nature">
        <title>Sequencing of Aspergillus nidulans and comparative analysis with A. fumigatus and A. oryzae.</title>
        <authorList>
            <person name="Galagan J.E."/>
            <person name="Calvo S.E."/>
            <person name="Cuomo C."/>
            <person name="Ma L.-J."/>
            <person name="Wortman J.R."/>
            <person name="Batzoglou S."/>
            <person name="Lee S.-I."/>
            <person name="Bastuerkmen M."/>
            <person name="Spevak C.C."/>
            <person name="Clutterbuck J."/>
            <person name="Kapitonov V."/>
            <person name="Jurka J."/>
            <person name="Scazzocchio C."/>
            <person name="Farman M.L."/>
            <person name="Butler J."/>
            <person name="Purcell S."/>
            <person name="Harris S."/>
            <person name="Braus G.H."/>
            <person name="Draht O."/>
            <person name="Busch S."/>
            <person name="D'Enfert C."/>
            <person name="Bouchier C."/>
            <person name="Goldman G.H."/>
            <person name="Bell-Pedersen D."/>
            <person name="Griffiths-Jones S."/>
            <person name="Doonan J.H."/>
            <person name="Yu J."/>
            <person name="Vienken K."/>
            <person name="Pain A."/>
            <person name="Freitag M."/>
            <person name="Selker E.U."/>
            <person name="Archer D.B."/>
            <person name="Penalva M.A."/>
            <person name="Oakley B.R."/>
            <person name="Momany M."/>
            <person name="Tanaka T."/>
            <person name="Kumagai T."/>
            <person name="Asai K."/>
            <person name="Machida M."/>
            <person name="Nierman W.C."/>
            <person name="Denning D.W."/>
            <person name="Caddick M.X."/>
            <person name="Hynes M."/>
            <person name="Paoletti M."/>
            <person name="Fischer R."/>
            <person name="Miller B.L."/>
            <person name="Dyer P.S."/>
            <person name="Sachs M.S."/>
            <person name="Osmani S.A."/>
            <person name="Birren B.W."/>
        </authorList>
    </citation>
    <scope>NUCLEOTIDE SEQUENCE [LARGE SCALE GENOMIC DNA]</scope>
    <source>
        <strain>FGSC A4 / ATCC 38163 / CBS 112.46 / NRRL 194 / M139</strain>
    </source>
</reference>
<reference key="4">
    <citation type="journal article" date="2009" name="Fungal Genet. Biol.">
        <title>The 2008 update of the Aspergillus nidulans genome annotation: a community effort.</title>
        <authorList>
            <person name="Wortman J.R."/>
            <person name="Gilsenan J.M."/>
            <person name="Joardar V."/>
            <person name="Deegan J."/>
            <person name="Clutterbuck J."/>
            <person name="Andersen M.R."/>
            <person name="Archer D."/>
            <person name="Bencina M."/>
            <person name="Braus G."/>
            <person name="Coutinho P."/>
            <person name="von Dohren H."/>
            <person name="Doonan J."/>
            <person name="Driessen A.J."/>
            <person name="Durek P."/>
            <person name="Espeso E."/>
            <person name="Fekete E."/>
            <person name="Flipphi M."/>
            <person name="Estrada C.G."/>
            <person name="Geysens S."/>
            <person name="Goldman G."/>
            <person name="de Groot P.W."/>
            <person name="Hansen K."/>
            <person name="Harris S.D."/>
            <person name="Heinekamp T."/>
            <person name="Helmstaedt K."/>
            <person name="Henrissat B."/>
            <person name="Hofmann G."/>
            <person name="Homan T."/>
            <person name="Horio T."/>
            <person name="Horiuchi H."/>
            <person name="James S."/>
            <person name="Jones M."/>
            <person name="Karaffa L."/>
            <person name="Karanyi Z."/>
            <person name="Kato M."/>
            <person name="Keller N."/>
            <person name="Kelly D.E."/>
            <person name="Kiel J.A."/>
            <person name="Kim J.M."/>
            <person name="van der Klei I.J."/>
            <person name="Klis F.M."/>
            <person name="Kovalchuk A."/>
            <person name="Krasevec N."/>
            <person name="Kubicek C.P."/>
            <person name="Liu B."/>
            <person name="Maccabe A."/>
            <person name="Meyer V."/>
            <person name="Mirabito P."/>
            <person name="Miskei M."/>
            <person name="Mos M."/>
            <person name="Mullins J."/>
            <person name="Nelson D.R."/>
            <person name="Nielsen J."/>
            <person name="Oakley B.R."/>
            <person name="Osmani S.A."/>
            <person name="Pakula T."/>
            <person name="Paszewski A."/>
            <person name="Paulsen I."/>
            <person name="Pilsyk S."/>
            <person name="Pocsi I."/>
            <person name="Punt P.J."/>
            <person name="Ram A.F."/>
            <person name="Ren Q."/>
            <person name="Robellet X."/>
            <person name="Robson G."/>
            <person name="Seiboth B."/>
            <person name="van Solingen P."/>
            <person name="Specht T."/>
            <person name="Sun J."/>
            <person name="Taheri-Talesh N."/>
            <person name="Takeshita N."/>
            <person name="Ussery D."/>
            <person name="vanKuyk P.A."/>
            <person name="Visser H."/>
            <person name="van de Vondervoort P.J."/>
            <person name="de Vries R.P."/>
            <person name="Walton J."/>
            <person name="Xiang X."/>
            <person name="Xiong Y."/>
            <person name="Zeng A.P."/>
            <person name="Brandt B.W."/>
            <person name="Cornell M.J."/>
            <person name="van den Hondel C.A."/>
            <person name="Visser J."/>
            <person name="Oliver S.G."/>
            <person name="Turner G."/>
        </authorList>
    </citation>
    <scope>GENOME REANNOTATION</scope>
    <source>
        <strain>FGSC A4 / ATCC 38163 / CBS 112.46 / NRRL 194 / M139</strain>
    </source>
</reference>
<reference key="5">
    <citation type="journal article" date="1991" name="Mol. Gen. Genet.">
        <title>Isolation and transcriptional characterization of a morphological modifier: the Aspergillus nidulans stunted (stuA) gene.</title>
        <authorList>
            <person name="Miller K.Y."/>
            <person name="Toennis T.M."/>
            <person name="Adams T.H."/>
            <person name="Miller B.L."/>
        </authorList>
    </citation>
    <scope>INDUCTION</scope>
</reference>
<reference key="6">
    <citation type="journal article" date="1996" name="Genetics">
        <title>Suppression and enhancement of the Aspergillus nidulans medusa mutation by altered dosage of the bristle and stunted genes.</title>
        <authorList>
            <person name="Busby T.M."/>
            <person name="Miller K.Y."/>
            <person name="Miller B.L."/>
        </authorList>
    </citation>
    <scope>FUNCTION</scope>
</reference>
<reference key="7">
    <citation type="journal article" date="1997" name="EMBO J.">
        <title>StuAp is a sequence-specific transcription factor that regulates developmental complexity in Aspergillus nidulans.</title>
        <authorList>
            <person name="Dutton J.R."/>
            <person name="Johns S."/>
            <person name="Miller B.L."/>
        </authorList>
    </citation>
    <scope>FUNCTION</scope>
    <scope>DNA-BINDING</scope>
</reference>
<reference key="8">
    <citation type="journal article" date="1997" name="Mol. Cell. Biol.">
        <title>Aspergillus asexual reproduction and sexual reproduction are differentially affected by transcriptional and translational mechanisms regulating stunted gene expression.</title>
        <authorList>
            <person name="Wu J."/>
            <person name="Miller B.L."/>
        </authorList>
    </citation>
    <scope>INDUCTION</scope>
    <scope>FUNCTION</scope>
</reference>
<reference key="9">
    <citation type="journal article" date="1997" name="Mol. Microbiol.">
        <title>Nuclear traffic in fungal hyphae: in vivo study of nuclear migration and positioning in Aspergillus nidulans.</title>
        <authorList>
            <person name="Suelmann R."/>
            <person name="Sievers N."/>
            <person name="Fischer R."/>
        </authorList>
    </citation>
    <scope>SUBCELLULAR LOCATION</scope>
</reference>
<reference key="10">
    <citation type="journal article" date="2002" name="Eukaryot. Cell">
        <title>Aspergillus nidulans catalase-peroxidase gene (cpeA) is transcriptionally induced during sexual development through the transcription factor StuA.</title>
        <authorList>
            <person name="Scherer M."/>
            <person name="Wei H."/>
            <person name="Liese R."/>
            <person name="Fischer R."/>
        </authorList>
    </citation>
    <scope>FUNCTION</scope>
</reference>
<reference key="11">
    <citation type="journal article" date="2007" name="Eukaryot. Cell">
        <title>Aspergillus nidulans conidiation genes dewA, fluG, and stuA are differentially regulated in early vegetative growth.</title>
        <authorList>
            <person name="Breakspear A."/>
            <person name="Momany M."/>
        </authorList>
    </citation>
    <scope>INDUCTION</scope>
</reference>
<reference key="12">
    <citation type="journal article" date="2013" name="PLoS ONE">
        <title>LAMMER Kinase LkhA plays multiple roles in the vegetative growth and asexual and sexual development of Aspergillus nidulans.</title>
        <authorList>
            <person name="Kang E.H."/>
            <person name="Kim J.A."/>
            <person name="Oh H.W."/>
            <person name="Park H.M."/>
        </authorList>
    </citation>
    <scope>INDUCTION</scope>
</reference>
<reference key="13">
    <citation type="journal article" date="2014" name="J. Microbiol.">
        <title>Transcriptional regulation of fksA, a beta-1,3-glucan synthase gene, by the APSES protein StuA during Aspergillus nidulans development.</title>
        <authorList>
            <person name="Park B.C."/>
            <person name="Park Y.H."/>
            <person name="Yi S."/>
            <person name="Choi Y.K."/>
            <person name="Kang E.H."/>
            <person name="Park H.M."/>
        </authorList>
    </citation>
    <scope>FUNCTION</scope>
    <scope>DISRUPTION PHENOTYPE</scope>
    <scope>DNA-BINDING</scope>
</reference>
<reference key="14">
    <citation type="journal article" date="2015" name="Mycologia">
        <title>Neurospora crassa ASM-1 complements the conidiation defect in a stuA mutant of Aspergillus nidulans.</title>
        <authorList>
            <person name="Chung D."/>
            <person name="Upadhyay S."/>
            <person name="Bomer B."/>
            <person name="Wilkinson H.H."/>
            <person name="Ebbole D.J."/>
            <person name="Shaw B.D."/>
        </authorList>
    </citation>
    <scope>FUNCTION</scope>
    <scope>DISRUPTION PHENOTYPE</scope>
    <scope>SUBCELLULAR LOCATION</scope>
</reference>
<proteinExistence type="evidence at protein level"/>
<dbReference type="EMBL" id="M83569">
    <property type="protein sequence ID" value="AAA33325.2"/>
    <property type="molecule type" value="Genomic_DNA"/>
</dbReference>
<dbReference type="EMBL" id="AACD01000100">
    <property type="protein sequence ID" value="EAA58345.1"/>
    <property type="molecule type" value="Genomic_DNA"/>
</dbReference>
<dbReference type="EMBL" id="BN001301">
    <property type="protein sequence ID" value="CBF70741.1"/>
    <property type="molecule type" value="Genomic_DNA"/>
</dbReference>
<dbReference type="PIR" id="A44068">
    <property type="entry name" value="A44068"/>
</dbReference>
<dbReference type="RefSeq" id="XP_050467081.1">
    <property type="nucleotide sequence ID" value="XM_050612722.1"/>
</dbReference>
<dbReference type="RefSeq" id="XP_663440.1">
    <property type="nucleotide sequence ID" value="XM_658348.1"/>
</dbReference>
<dbReference type="SMR" id="P36011"/>
<dbReference type="STRING" id="227321.P36011"/>
<dbReference type="EnsemblFungi" id="CBF70741">
    <property type="protein sequence ID" value="CBF70741"/>
    <property type="gene ID" value="ANIA_05836"/>
</dbReference>
<dbReference type="GeneID" id="2870743"/>
<dbReference type="VEuPathDB" id="FungiDB:AN5836"/>
<dbReference type="eggNOG" id="ENOG502QW2C">
    <property type="taxonomic scope" value="Eukaryota"/>
</dbReference>
<dbReference type="HOGENOM" id="CLU_016460_0_0_1"/>
<dbReference type="InParanoid" id="P36011"/>
<dbReference type="OMA" id="HEAEYTH"/>
<dbReference type="OrthoDB" id="5407653at2759"/>
<dbReference type="Proteomes" id="UP000000560">
    <property type="component" value="Chromosome I"/>
</dbReference>
<dbReference type="GO" id="GO:0005634">
    <property type="term" value="C:nucleus"/>
    <property type="evidence" value="ECO:0000318"/>
    <property type="project" value="GO_Central"/>
</dbReference>
<dbReference type="GO" id="GO:0003700">
    <property type="term" value="F:DNA-binding transcription factor activity"/>
    <property type="evidence" value="ECO:0000314"/>
    <property type="project" value="AspGD"/>
</dbReference>
<dbReference type="GO" id="GO:0043565">
    <property type="term" value="F:sequence-specific DNA binding"/>
    <property type="evidence" value="ECO:0000318"/>
    <property type="project" value="GO_Central"/>
</dbReference>
<dbReference type="GO" id="GO:0070787">
    <property type="term" value="P:conidiophore development"/>
    <property type="evidence" value="ECO:0000315"/>
    <property type="project" value="AspGD"/>
</dbReference>
<dbReference type="GO" id="GO:0048315">
    <property type="term" value="P:conidium formation"/>
    <property type="evidence" value="ECO:0000315"/>
    <property type="project" value="AspGD"/>
</dbReference>
<dbReference type="GO" id="GO:0070795">
    <property type="term" value="P:positive regulation of conidiophore development"/>
    <property type="evidence" value="ECO:0000315"/>
    <property type="project" value="AspGD"/>
</dbReference>
<dbReference type="GO" id="GO:0075307">
    <property type="term" value="P:positive regulation of conidium formation"/>
    <property type="evidence" value="ECO:0000315"/>
    <property type="project" value="AspGD"/>
</dbReference>
<dbReference type="GO" id="GO:0045944">
    <property type="term" value="P:positive regulation of transcription by RNA polymerase II"/>
    <property type="evidence" value="ECO:0000318"/>
    <property type="project" value="GO_Central"/>
</dbReference>
<dbReference type="GO" id="GO:0006357">
    <property type="term" value="P:regulation of transcription by RNA polymerase II"/>
    <property type="evidence" value="ECO:0000315"/>
    <property type="project" value="AspGD"/>
</dbReference>
<dbReference type="GO" id="GO:0000905">
    <property type="term" value="P:sporocarp development involved in asexual reproduction"/>
    <property type="evidence" value="ECO:0000315"/>
    <property type="project" value="AspGD"/>
</dbReference>
<dbReference type="GO" id="GO:0030435">
    <property type="term" value="P:sporulation resulting in formation of a cellular spore"/>
    <property type="evidence" value="ECO:0007669"/>
    <property type="project" value="UniProtKB-KW"/>
</dbReference>
<dbReference type="FunFam" id="3.10.260.10:FF:000003">
    <property type="entry name" value="Ascospore maturation 1 protein"/>
    <property type="match status" value="1"/>
</dbReference>
<dbReference type="Gene3D" id="3.10.260.10">
    <property type="entry name" value="Transcription regulator HTH, APSES-type DNA-binding domain"/>
    <property type="match status" value="1"/>
</dbReference>
<dbReference type="InterPro" id="IPR029790">
    <property type="entry name" value="EFG1/Phd1/StuA"/>
</dbReference>
<dbReference type="InterPro" id="IPR036887">
    <property type="entry name" value="HTH_APSES_sf"/>
</dbReference>
<dbReference type="InterPro" id="IPR018004">
    <property type="entry name" value="KilA/APSES_HTH"/>
</dbReference>
<dbReference type="InterPro" id="IPR003163">
    <property type="entry name" value="Tscrpt_reg_HTH_APSES-type"/>
</dbReference>
<dbReference type="PANTHER" id="PTHR47792">
    <property type="entry name" value="PROTEIN SOK2-RELATED"/>
    <property type="match status" value="1"/>
</dbReference>
<dbReference type="PANTHER" id="PTHR47792:SF1">
    <property type="entry name" value="PROTEIN SOK2-RELATED"/>
    <property type="match status" value="1"/>
</dbReference>
<dbReference type="Pfam" id="PF04383">
    <property type="entry name" value="KilA-N"/>
    <property type="match status" value="1"/>
</dbReference>
<dbReference type="SMART" id="SM01252">
    <property type="entry name" value="KilA-N"/>
    <property type="match status" value="1"/>
</dbReference>
<dbReference type="SUPFAM" id="SSF54616">
    <property type="entry name" value="DNA-binding domain of Mlu1-box binding protein MBP1"/>
    <property type="match status" value="1"/>
</dbReference>
<dbReference type="PROSITE" id="PS51299">
    <property type="entry name" value="HTH_APSES"/>
    <property type="match status" value="1"/>
</dbReference>
<sequence length="622" mass="66956">MASMNQPQPYMDVHSHLSSGQTYASHPATAGALTHYQYPQQPPVLQPTSTYGPASSYSQYPYPNSVASSQSVPPPTTSISSQVPAQLLPLPVTNHPVPTHGYGNNSGTPMQGYVYDPTGQMAPPGAKPRVTATLWEDEGSLCYQVEAKGVCVARREDNGMINGTKLLNVAGMTRGRRDGILKSEKVRNVVKIGPMHLKGVWIPFDRALEFANKEKITDLLYPLFVQHISNLLYHPANQNQRNMTVPDSRRLEGPQPVVRTPQAQQPPSLHHHSLQTPVPSHMSQPGGRPSLDRAHTFPTPPASASSLIGITSQNNSYDWNPGMNSSVPNTQPLSIDTSLSNARSMPTTPATTPPGNNLQGMQSYQPQSGYDSKPYYSAAPSTHPQYAPQQPLPQQSMAQYGHSMPTSSYRDMAPPSSQRGSVTEIESDVKTERYGQGTVAKTEPEQEQEYAQPDSGYNTGRGSYYTTNPSVGGLAHDHSQLTPDMTGSPQQNGSGRMTPRTSNTAPQWAPGYTTPPRPAAASSLYNIVSDTRGTSGANGSTSDNYSVASNSGYSTGMNGSMGSNKRMRDDDDDRIVPPDSRGEFDTKRRKTLTETPVGGPVGGVPLGLQPMKAGGSLISARR</sequence>
<accession>P36011</accession>
<accession>C8V024</accession>
<accession>Q5B0U4</accession>
<name>STUA_EMENI</name>
<organism>
    <name type="scientific">Emericella nidulans (strain FGSC A4 / ATCC 38163 / CBS 112.46 / NRRL 194 / M139)</name>
    <name type="common">Aspergillus nidulans</name>
    <dbReference type="NCBI Taxonomy" id="227321"/>
    <lineage>
        <taxon>Eukaryota</taxon>
        <taxon>Fungi</taxon>
        <taxon>Dikarya</taxon>
        <taxon>Ascomycota</taxon>
        <taxon>Pezizomycotina</taxon>
        <taxon>Eurotiomycetes</taxon>
        <taxon>Eurotiomycetidae</taxon>
        <taxon>Eurotiales</taxon>
        <taxon>Aspergillaceae</taxon>
        <taxon>Aspergillus</taxon>
        <taxon>Aspergillus subgen. Nidulantes</taxon>
    </lineage>
</organism>